<reference key="1">
    <citation type="journal article" date="2009" name="PLoS Biol.">
        <title>Lineage-specific biology revealed by a finished genome assembly of the mouse.</title>
        <authorList>
            <person name="Church D.M."/>
            <person name="Goodstadt L."/>
            <person name="Hillier L.W."/>
            <person name="Zody M.C."/>
            <person name="Goldstein S."/>
            <person name="She X."/>
            <person name="Bult C.J."/>
            <person name="Agarwala R."/>
            <person name="Cherry J.L."/>
            <person name="DiCuccio M."/>
            <person name="Hlavina W."/>
            <person name="Kapustin Y."/>
            <person name="Meric P."/>
            <person name="Maglott D."/>
            <person name="Birtle Z."/>
            <person name="Marques A.C."/>
            <person name="Graves T."/>
            <person name="Zhou S."/>
            <person name="Teague B."/>
            <person name="Potamousis K."/>
            <person name="Churas C."/>
            <person name="Place M."/>
            <person name="Herschleb J."/>
            <person name="Runnheim R."/>
            <person name="Forrest D."/>
            <person name="Amos-Landgraf J."/>
            <person name="Schwartz D.C."/>
            <person name="Cheng Z."/>
            <person name="Lindblad-Toh K."/>
            <person name="Eichler E.E."/>
            <person name="Ponting C.P."/>
        </authorList>
    </citation>
    <scope>NUCLEOTIDE SEQUENCE [LARGE SCALE GENOMIC DNA]</scope>
    <source>
        <strain>C57BL/6J</strain>
    </source>
</reference>
<reference key="2">
    <citation type="journal article" date="2003" name="Gene Expr. Patterns">
        <title>Sexually dimorphic expression of multiple doublesex-related genes in the embryonic mouse gonad.</title>
        <authorList>
            <person name="Kim S."/>
            <person name="Kettlewell J.R."/>
            <person name="Anderson R.C."/>
            <person name="Bardwell V.J."/>
            <person name="Zarkower D."/>
        </authorList>
    </citation>
    <scope>NUCLEOTIDE SEQUENCE [MRNA] OF 1-257</scope>
    <scope>TISSUE SPECIFICITY</scope>
</reference>
<reference key="3">
    <citation type="journal article" date="2010" name="Cell">
        <title>A tissue-specific atlas of mouse protein phosphorylation and expression.</title>
        <authorList>
            <person name="Huttlin E.L."/>
            <person name="Jedrychowski M.P."/>
            <person name="Elias J.E."/>
            <person name="Goswami T."/>
            <person name="Rad R."/>
            <person name="Beausoleil S.A."/>
            <person name="Villen J."/>
            <person name="Haas W."/>
            <person name="Sowa M.E."/>
            <person name="Gygi S.P."/>
        </authorList>
    </citation>
    <scope>IDENTIFICATION BY MASS SPECTROMETRY [LARGE SCALE ANALYSIS]</scope>
    <source>
        <tissue>Testis</tissue>
    </source>
</reference>
<dbReference type="EMBL" id="AL627259">
    <property type="status" value="NOT_ANNOTATED_CDS"/>
    <property type="molecule type" value="Genomic_DNA"/>
</dbReference>
<dbReference type="EMBL" id="AF542048">
    <property type="protein sequence ID" value="AAN77235.1"/>
    <property type="molecule type" value="mRNA"/>
</dbReference>
<dbReference type="CCDS" id="CCDS51254.1"/>
<dbReference type="RefSeq" id="NP_063925.1">
    <property type="nucleotide sequence ID" value="NM_019872.3"/>
</dbReference>
<dbReference type="RefSeq" id="XP_030109541.1">
    <property type="nucleotide sequence ID" value="XM_030253681.1"/>
</dbReference>
<dbReference type="RefSeq" id="XP_036020150.1">
    <property type="nucleotide sequence ID" value="XM_036164257.1"/>
</dbReference>
<dbReference type="SMR" id="A2A9I7"/>
<dbReference type="FunCoup" id="A2A9I7">
    <property type="interactions" value="738"/>
</dbReference>
<dbReference type="STRING" id="10090.ENSMUSP00000064220"/>
<dbReference type="GlyGen" id="A2A9I7">
    <property type="glycosylation" value="2 sites"/>
</dbReference>
<dbReference type="PhosphoSitePlus" id="A2A9I7"/>
<dbReference type="SwissPalm" id="A2A9I7"/>
<dbReference type="PaxDb" id="10090-ENSMUSP00000064220"/>
<dbReference type="PeptideAtlas" id="A2A9I7"/>
<dbReference type="ProteomicsDB" id="279440"/>
<dbReference type="Antibodypedia" id="19214">
    <property type="antibodies" value="90 antibodies from 20 providers"/>
</dbReference>
<dbReference type="Ensembl" id="ENSMUST00000069271.5">
    <property type="protein sequence ID" value="ENSMUSP00000064220.5"/>
    <property type="gene ID" value="ENSMUSG00000028610.17"/>
</dbReference>
<dbReference type="GeneID" id="56296"/>
<dbReference type="KEGG" id="mmu:56296"/>
<dbReference type="UCSC" id="uc008tzy.2">
    <property type="organism name" value="mouse"/>
</dbReference>
<dbReference type="AGR" id="MGI:1927125"/>
<dbReference type="CTD" id="63948"/>
<dbReference type="MGI" id="MGI:1927125">
    <property type="gene designation" value="Dmrtb1"/>
</dbReference>
<dbReference type="VEuPathDB" id="HostDB:ENSMUSG00000028610"/>
<dbReference type="eggNOG" id="KOG3815">
    <property type="taxonomic scope" value="Eukaryota"/>
</dbReference>
<dbReference type="GeneTree" id="ENSGT00940000161912"/>
<dbReference type="HOGENOM" id="CLU_073336_0_0_1"/>
<dbReference type="InParanoid" id="A2A9I7"/>
<dbReference type="OMA" id="FTDFGRP"/>
<dbReference type="OrthoDB" id="6162476at2759"/>
<dbReference type="PhylomeDB" id="A2A9I7"/>
<dbReference type="TreeFam" id="TF317837"/>
<dbReference type="BioGRID-ORCS" id="56296">
    <property type="hits" value="8 hits in 77 CRISPR screens"/>
</dbReference>
<dbReference type="ChiTaRS" id="Dmrtb1">
    <property type="organism name" value="mouse"/>
</dbReference>
<dbReference type="PRO" id="PR:A2A9I7"/>
<dbReference type="Proteomes" id="UP000000589">
    <property type="component" value="Chromosome 4"/>
</dbReference>
<dbReference type="RNAct" id="A2A9I7">
    <property type="molecule type" value="protein"/>
</dbReference>
<dbReference type="Bgee" id="ENSMUSG00000028610">
    <property type="expression patterns" value="Expressed in seminiferous tubule of testis and 56 other cell types or tissues"/>
</dbReference>
<dbReference type="ExpressionAtlas" id="A2A9I7">
    <property type="expression patterns" value="baseline and differential"/>
</dbReference>
<dbReference type="GO" id="GO:0005634">
    <property type="term" value="C:nucleus"/>
    <property type="evidence" value="ECO:0007669"/>
    <property type="project" value="UniProtKB-SubCell"/>
</dbReference>
<dbReference type="GO" id="GO:0003677">
    <property type="term" value="F:DNA binding"/>
    <property type="evidence" value="ECO:0007669"/>
    <property type="project" value="UniProtKB-KW"/>
</dbReference>
<dbReference type="GO" id="GO:0046872">
    <property type="term" value="F:metal ion binding"/>
    <property type="evidence" value="ECO:0007669"/>
    <property type="project" value="UniProtKB-KW"/>
</dbReference>
<dbReference type="GO" id="GO:0006355">
    <property type="term" value="P:regulation of DNA-templated transcription"/>
    <property type="evidence" value="ECO:0007669"/>
    <property type="project" value="InterPro"/>
</dbReference>
<dbReference type="FunFam" id="4.10.1040.10:FF:000001">
    <property type="entry name" value="doublesex- and mab-3-related transcription factor 1"/>
    <property type="match status" value="1"/>
</dbReference>
<dbReference type="Gene3D" id="4.10.1040.10">
    <property type="entry name" value="DM DNA-binding domain"/>
    <property type="match status" value="1"/>
</dbReference>
<dbReference type="InterPro" id="IPR001275">
    <property type="entry name" value="DM_DNA-bd"/>
</dbReference>
<dbReference type="InterPro" id="IPR036407">
    <property type="entry name" value="DM_DNA-bd_sf"/>
</dbReference>
<dbReference type="InterPro" id="IPR026607">
    <property type="entry name" value="DMRT"/>
</dbReference>
<dbReference type="PANTHER" id="PTHR12322">
    <property type="entry name" value="DOUBLESEX AND MAB-3 RELATED TRANSCRIPTION FACTOR DMRT"/>
    <property type="match status" value="1"/>
</dbReference>
<dbReference type="PANTHER" id="PTHR12322:SF66">
    <property type="entry name" value="DOUBLESEX- AND MAB-3-RELATED TRANSCRIPTION FACTOR B1"/>
    <property type="match status" value="1"/>
</dbReference>
<dbReference type="Pfam" id="PF00751">
    <property type="entry name" value="DM"/>
    <property type="match status" value="1"/>
</dbReference>
<dbReference type="PRINTS" id="PR01217">
    <property type="entry name" value="PRICHEXTENSN"/>
</dbReference>
<dbReference type="SMART" id="SM00301">
    <property type="entry name" value="DM"/>
    <property type="match status" value="1"/>
</dbReference>
<dbReference type="SUPFAM" id="SSF82927">
    <property type="entry name" value="Cysteine-rich DNA binding domain, (DM domain)"/>
    <property type="match status" value="1"/>
</dbReference>
<dbReference type="PROSITE" id="PS40000">
    <property type="entry name" value="DM_1"/>
    <property type="match status" value="1"/>
</dbReference>
<dbReference type="PROSITE" id="PS50809">
    <property type="entry name" value="DM_2"/>
    <property type="match status" value="1"/>
</dbReference>
<keyword id="KW-0238">DNA-binding</keyword>
<keyword id="KW-0479">Metal-binding</keyword>
<keyword id="KW-0539">Nucleus</keyword>
<keyword id="KW-1185">Reference proteome</keyword>
<keyword id="KW-0804">Transcription</keyword>
<keyword id="KW-0805">Transcription regulation</keyword>
<keyword id="KW-0862">Zinc</keyword>
<proteinExistence type="evidence at protein level"/>
<name>DMRTB_MOUSE</name>
<sequence length="359" mass="38424">MLRAPKCSRCRNHGYLVPVKGHTGKCRWKQCICDKCYLITERQKIMAAQKVLRTQAAEEQVATVGTQGPQLPPRAPAAAATALSSSICPLPRAVPGGVGPGPTATCFLERPPQAPSPGPSTFQLGPSGRPGPSTFQPGPGAPGGLRDRSSAWLPQLMPQAPRPELCYPDQHLPVRPVPVPGPVRPVPRLPFADYGHPLRFKSDHVVGAGNPEREPFKQCPACVPVSPYQSFPLSEGQDSSSALGVPQQRGFRHVSCSPYHRSGLVSEPARDLQPTYCSPPPPPPPPPPPPLPAPPPQPQQPHFLPPGYLSALHFLPPPPPPPSPPSFSLTYDTDKENTNDQDAEAPTEPSQDSPQEQSN</sequence>
<feature type="chain" id="PRO_0000316013" description="Doublesex- and mab-3-related transcription factor B1">
    <location>
        <begin position="1"/>
        <end position="359"/>
    </location>
</feature>
<feature type="DNA-binding region" description="DM" evidence="1">
    <location>
        <begin position="7"/>
        <end position="54"/>
    </location>
</feature>
<feature type="region of interest" description="Disordered" evidence="2">
    <location>
        <begin position="111"/>
        <end position="149"/>
    </location>
</feature>
<feature type="region of interest" description="Disordered" evidence="2">
    <location>
        <begin position="262"/>
        <end position="359"/>
    </location>
</feature>
<feature type="compositionally biased region" description="Pro residues" evidence="2">
    <location>
        <begin position="277"/>
        <end position="299"/>
    </location>
</feature>
<feature type="compositionally biased region" description="Pro residues" evidence="2">
    <location>
        <begin position="315"/>
        <end position="325"/>
    </location>
</feature>
<feature type="compositionally biased region" description="Polar residues" evidence="2">
    <location>
        <begin position="348"/>
        <end position="359"/>
    </location>
</feature>
<accession>A2A9I7</accession>
<accession>Q8CGW8</accession>
<organism>
    <name type="scientific">Mus musculus</name>
    <name type="common">Mouse</name>
    <dbReference type="NCBI Taxonomy" id="10090"/>
    <lineage>
        <taxon>Eukaryota</taxon>
        <taxon>Metazoa</taxon>
        <taxon>Chordata</taxon>
        <taxon>Craniata</taxon>
        <taxon>Vertebrata</taxon>
        <taxon>Euteleostomi</taxon>
        <taxon>Mammalia</taxon>
        <taxon>Eutheria</taxon>
        <taxon>Euarchontoglires</taxon>
        <taxon>Glires</taxon>
        <taxon>Rodentia</taxon>
        <taxon>Myomorpha</taxon>
        <taxon>Muroidea</taxon>
        <taxon>Muridae</taxon>
        <taxon>Murinae</taxon>
        <taxon>Mus</taxon>
        <taxon>Mus</taxon>
    </lineage>
</organism>
<evidence type="ECO:0000255" key="1">
    <source>
        <dbReference type="PROSITE-ProRule" id="PRU00070"/>
    </source>
</evidence>
<evidence type="ECO:0000256" key="2">
    <source>
        <dbReference type="SAM" id="MobiDB-lite"/>
    </source>
</evidence>
<evidence type="ECO:0000269" key="3">
    <source>
    </source>
</evidence>
<evidence type="ECO:0000305" key="4"/>
<comment type="subcellular location">
    <subcellularLocation>
        <location evidence="1">Nucleus</location>
    </subcellularLocation>
</comment>
<comment type="tissue specificity">
    <text evidence="3">Brain.</text>
</comment>
<comment type="similarity">
    <text evidence="4">Belongs to the DMRT family.</text>
</comment>
<gene>
    <name type="primary">Dmrtb1</name>
    <name type="synonym">Dmrt6</name>
</gene>
<protein>
    <recommendedName>
        <fullName>Doublesex- and mab-3-related transcription factor B1</fullName>
    </recommendedName>
    <alternativeName>
        <fullName>Doublesex- and mab-3-related transcription factor 6</fullName>
    </alternativeName>
</protein>